<proteinExistence type="inferred from homology"/>
<sequence length="181" mass="20546">MSEAPKKRWYVVQAFSGFEGRVATSLREHIKLHNMEELFGEVMVPTEEVVEIRGGQRRKSERKFFPGYVLVQMVMNDASWHLVRSVPRVMGFIGGTSDRPAPISDKEVDAIMNRLQQVGDKPRPKTLFEPGEMVRVNDGPFADFNGVVEEVDYEKSRLKVSVSIFGRATPVELDFSQVEKA</sequence>
<dbReference type="EMBL" id="AE014075">
    <property type="protein sequence ID" value="AAN83365.1"/>
    <property type="molecule type" value="Genomic_DNA"/>
</dbReference>
<dbReference type="RefSeq" id="WP_001287521.1">
    <property type="nucleotide sequence ID" value="NZ_CP051263.1"/>
</dbReference>
<dbReference type="BMRB" id="P0AA01"/>
<dbReference type="SMR" id="P0AA01"/>
<dbReference type="STRING" id="199310.c4937"/>
<dbReference type="GeneID" id="93251707"/>
<dbReference type="KEGG" id="ecc:c4937"/>
<dbReference type="eggNOG" id="COG0250">
    <property type="taxonomic scope" value="Bacteria"/>
</dbReference>
<dbReference type="HOGENOM" id="CLU_067287_1_0_6"/>
<dbReference type="BioCyc" id="ECOL199310:C4937-MONOMER"/>
<dbReference type="Proteomes" id="UP000001410">
    <property type="component" value="Chromosome"/>
</dbReference>
<dbReference type="GO" id="GO:0005829">
    <property type="term" value="C:cytosol"/>
    <property type="evidence" value="ECO:0007669"/>
    <property type="project" value="TreeGrafter"/>
</dbReference>
<dbReference type="GO" id="GO:0006353">
    <property type="term" value="P:DNA-templated transcription termination"/>
    <property type="evidence" value="ECO:0007669"/>
    <property type="project" value="UniProtKB-UniRule"/>
</dbReference>
<dbReference type="GO" id="GO:0032784">
    <property type="term" value="P:regulation of DNA-templated transcription elongation"/>
    <property type="evidence" value="ECO:0007669"/>
    <property type="project" value="InterPro"/>
</dbReference>
<dbReference type="GO" id="GO:0031564">
    <property type="term" value="P:transcription antitermination"/>
    <property type="evidence" value="ECO:0007669"/>
    <property type="project" value="UniProtKB-UniRule"/>
</dbReference>
<dbReference type="GO" id="GO:0140673">
    <property type="term" value="P:transcription elongation-coupled chromatin remodeling"/>
    <property type="evidence" value="ECO:0007669"/>
    <property type="project" value="InterPro"/>
</dbReference>
<dbReference type="CDD" id="cd06091">
    <property type="entry name" value="KOW_NusG"/>
    <property type="match status" value="1"/>
</dbReference>
<dbReference type="CDD" id="cd09891">
    <property type="entry name" value="NGN_Bact_1"/>
    <property type="match status" value="1"/>
</dbReference>
<dbReference type="FunFam" id="2.30.30.30:FF:000002">
    <property type="entry name" value="Transcription termination/antitermination factor NusG"/>
    <property type="match status" value="1"/>
</dbReference>
<dbReference type="FunFam" id="3.30.70.940:FF:000001">
    <property type="entry name" value="Transcription termination/antitermination protein NusG"/>
    <property type="match status" value="1"/>
</dbReference>
<dbReference type="Gene3D" id="2.30.30.30">
    <property type="match status" value="1"/>
</dbReference>
<dbReference type="Gene3D" id="3.30.70.940">
    <property type="entry name" value="NusG, N-terminal domain"/>
    <property type="match status" value="1"/>
</dbReference>
<dbReference type="HAMAP" id="MF_00948">
    <property type="entry name" value="NusG"/>
    <property type="match status" value="1"/>
</dbReference>
<dbReference type="InterPro" id="IPR005824">
    <property type="entry name" value="KOW"/>
</dbReference>
<dbReference type="InterPro" id="IPR047050">
    <property type="entry name" value="NGN"/>
</dbReference>
<dbReference type="InterPro" id="IPR006645">
    <property type="entry name" value="NGN-like_dom"/>
</dbReference>
<dbReference type="InterPro" id="IPR036735">
    <property type="entry name" value="NGN_dom_sf"/>
</dbReference>
<dbReference type="InterPro" id="IPR043425">
    <property type="entry name" value="NusG-like"/>
</dbReference>
<dbReference type="InterPro" id="IPR014722">
    <property type="entry name" value="Rib_uL2_dom2"/>
</dbReference>
<dbReference type="InterPro" id="IPR001062">
    <property type="entry name" value="Transcrpt_antiterm_NusG"/>
</dbReference>
<dbReference type="InterPro" id="IPR015869">
    <property type="entry name" value="Transcrpt_antiterm_NusG_bac_CS"/>
</dbReference>
<dbReference type="InterPro" id="IPR008991">
    <property type="entry name" value="Translation_prot_SH3-like_sf"/>
</dbReference>
<dbReference type="NCBIfam" id="TIGR00922">
    <property type="entry name" value="nusG"/>
    <property type="match status" value="1"/>
</dbReference>
<dbReference type="PANTHER" id="PTHR30265">
    <property type="entry name" value="RHO-INTERACTING TRANSCRIPTION TERMINATION FACTOR NUSG"/>
    <property type="match status" value="1"/>
</dbReference>
<dbReference type="PANTHER" id="PTHR30265:SF2">
    <property type="entry name" value="TRANSCRIPTION TERMINATION_ANTITERMINATION PROTEIN NUSG"/>
    <property type="match status" value="1"/>
</dbReference>
<dbReference type="Pfam" id="PF00467">
    <property type="entry name" value="KOW"/>
    <property type="match status" value="1"/>
</dbReference>
<dbReference type="Pfam" id="PF02357">
    <property type="entry name" value="NusG"/>
    <property type="match status" value="1"/>
</dbReference>
<dbReference type="PRINTS" id="PR00338">
    <property type="entry name" value="NUSGTNSCPFCT"/>
</dbReference>
<dbReference type="SMART" id="SM00739">
    <property type="entry name" value="KOW"/>
    <property type="match status" value="1"/>
</dbReference>
<dbReference type="SMART" id="SM00738">
    <property type="entry name" value="NGN"/>
    <property type="match status" value="1"/>
</dbReference>
<dbReference type="SUPFAM" id="SSF82679">
    <property type="entry name" value="N-utilization substance G protein NusG, N-terminal domain"/>
    <property type="match status" value="1"/>
</dbReference>
<dbReference type="SUPFAM" id="SSF50104">
    <property type="entry name" value="Translation proteins SH3-like domain"/>
    <property type="match status" value="1"/>
</dbReference>
<dbReference type="PROSITE" id="PS01014">
    <property type="entry name" value="NUSG"/>
    <property type="match status" value="1"/>
</dbReference>
<accession>P0AA01</accession>
<accession>Q9L9K0</accession>
<feature type="initiator methionine" description="Removed" evidence="1">
    <location>
        <position position="1"/>
    </location>
</feature>
<feature type="chain" id="PRO_0000113928" description="Transcription termination/antitermination protein NusG">
    <location>
        <begin position="2"/>
        <end position="181"/>
    </location>
</feature>
<feature type="domain" description="KOW" evidence="2">
    <location>
        <begin position="130"/>
        <end position="161"/>
    </location>
</feature>
<evidence type="ECO:0000250" key="1"/>
<evidence type="ECO:0000255" key="2">
    <source>
        <dbReference type="HAMAP-Rule" id="MF_00948"/>
    </source>
</evidence>
<reference key="1">
    <citation type="journal article" date="2002" name="Proc. Natl. Acad. Sci. U.S.A.">
        <title>Extensive mosaic structure revealed by the complete genome sequence of uropathogenic Escherichia coli.</title>
        <authorList>
            <person name="Welch R.A."/>
            <person name="Burland V."/>
            <person name="Plunkett G. III"/>
            <person name="Redford P."/>
            <person name="Roesch P."/>
            <person name="Rasko D."/>
            <person name="Buckles E.L."/>
            <person name="Liou S.-R."/>
            <person name="Boutin A."/>
            <person name="Hackett J."/>
            <person name="Stroud D."/>
            <person name="Mayhew G.F."/>
            <person name="Rose D.J."/>
            <person name="Zhou S."/>
            <person name="Schwartz D.C."/>
            <person name="Perna N.T."/>
            <person name="Mobley H.L.T."/>
            <person name="Donnenberg M.S."/>
            <person name="Blattner F.R."/>
        </authorList>
    </citation>
    <scope>NUCLEOTIDE SEQUENCE [LARGE SCALE GENOMIC DNA]</scope>
    <source>
        <strain>CFT073 / ATCC 700928 / UPEC</strain>
    </source>
</reference>
<protein>
    <recommendedName>
        <fullName evidence="2">Transcription termination/antitermination protein NusG</fullName>
    </recommendedName>
</protein>
<gene>
    <name evidence="2" type="primary">nusG</name>
    <name type="ordered locus">c4937</name>
</gene>
<organism>
    <name type="scientific">Escherichia coli O6:H1 (strain CFT073 / ATCC 700928 / UPEC)</name>
    <dbReference type="NCBI Taxonomy" id="199310"/>
    <lineage>
        <taxon>Bacteria</taxon>
        <taxon>Pseudomonadati</taxon>
        <taxon>Pseudomonadota</taxon>
        <taxon>Gammaproteobacteria</taxon>
        <taxon>Enterobacterales</taxon>
        <taxon>Enterobacteriaceae</taxon>
        <taxon>Escherichia</taxon>
    </lineage>
</organism>
<keyword id="KW-1185">Reference proteome</keyword>
<keyword id="KW-0804">Transcription</keyword>
<keyword id="KW-0889">Transcription antitermination</keyword>
<keyword id="KW-0805">Transcription regulation</keyword>
<keyword id="KW-0806">Transcription termination</keyword>
<comment type="function">
    <text evidence="2">Participates in transcription elongation, termination and antitermination. In the absence of Rho, increases the rate of transcription elongation by the RNA polymerase (RNAP), probably by partially suppressing pausing. In the presence of Rho, modulates most Rho-dependent termination events by interacting with the RNAP to render the complex more susceptible to the termination activity of Rho. May be required to overcome a kinetic limitation of Rho to function at certain terminators. Also involved in ribosomal RNA transcriptional antitermination.</text>
</comment>
<comment type="subunit">
    <text evidence="2">Monomer. Interacts with the transcription termination factor Rho and with RNA polymerase.</text>
</comment>
<comment type="similarity">
    <text evidence="2">Belongs to the NusG family.</text>
</comment>
<name>NUSG_ECOL6</name>